<keyword id="KW-0963">Cytoplasm</keyword>
<keyword id="KW-0396">Initiation factor</keyword>
<keyword id="KW-0648">Protein biosynthesis</keyword>
<keyword id="KW-0694">RNA-binding</keyword>
<keyword id="KW-0699">rRNA-binding</keyword>
<comment type="function">
    <text evidence="1">One of the essential components for the initiation of protein synthesis. Stabilizes the binding of IF-2 and IF-3 on the 30S subunit to which N-formylmethionyl-tRNA(fMet) subsequently binds. Helps modulate mRNA selection, yielding the 30S pre-initiation complex (PIC). Upon addition of the 50S ribosomal subunit IF-1, IF-2 and IF-3 are released leaving the mature 70S translation initiation complex.</text>
</comment>
<comment type="subunit">
    <text evidence="1">Component of the 30S ribosomal translation pre-initiation complex which assembles on the 30S ribosome in the order IF-2 and IF-3, IF-1 and N-formylmethionyl-tRNA(fMet); mRNA recruitment can occur at any time during PIC assembly.</text>
</comment>
<comment type="subcellular location">
    <subcellularLocation>
        <location evidence="1">Cytoplasm</location>
    </subcellularLocation>
</comment>
<comment type="similarity">
    <text evidence="1">Belongs to the IF-1 family.</text>
</comment>
<proteinExistence type="inferred from homology"/>
<protein>
    <recommendedName>
        <fullName evidence="1">Translation initiation factor IF-1</fullName>
    </recommendedName>
</protein>
<reference key="1">
    <citation type="submission" date="2006-12" db="EMBL/GenBank/DDBJ databases">
        <title>Complete sequence of Shewanella sp. W3-18-1.</title>
        <authorList>
            <consortium name="US DOE Joint Genome Institute"/>
            <person name="Copeland A."/>
            <person name="Lucas S."/>
            <person name="Lapidus A."/>
            <person name="Barry K."/>
            <person name="Detter J.C."/>
            <person name="Glavina del Rio T."/>
            <person name="Hammon N."/>
            <person name="Israni S."/>
            <person name="Dalin E."/>
            <person name="Tice H."/>
            <person name="Pitluck S."/>
            <person name="Chain P."/>
            <person name="Malfatti S."/>
            <person name="Shin M."/>
            <person name="Vergez L."/>
            <person name="Schmutz J."/>
            <person name="Larimer F."/>
            <person name="Land M."/>
            <person name="Hauser L."/>
            <person name="Kyrpides N."/>
            <person name="Lykidis A."/>
            <person name="Tiedje J."/>
            <person name="Richardson P."/>
        </authorList>
    </citation>
    <scope>NUCLEOTIDE SEQUENCE [LARGE SCALE GENOMIC DNA]</scope>
    <source>
        <strain>W3-18-1</strain>
    </source>
</reference>
<organism>
    <name type="scientific">Shewanella sp. (strain W3-18-1)</name>
    <dbReference type="NCBI Taxonomy" id="351745"/>
    <lineage>
        <taxon>Bacteria</taxon>
        <taxon>Pseudomonadati</taxon>
        <taxon>Pseudomonadota</taxon>
        <taxon>Gammaproteobacteria</taxon>
        <taxon>Alteromonadales</taxon>
        <taxon>Shewanellaceae</taxon>
        <taxon>Shewanella</taxon>
    </lineage>
</organism>
<feature type="chain" id="PRO_0000338924" description="Translation initiation factor IF-1">
    <location>
        <begin position="1"/>
        <end position="72"/>
    </location>
</feature>
<feature type="domain" description="S1-like" evidence="1">
    <location>
        <begin position="1"/>
        <end position="72"/>
    </location>
</feature>
<dbReference type="EMBL" id="CP000503">
    <property type="protein sequence ID" value="ABM24619.1"/>
    <property type="molecule type" value="Genomic_DNA"/>
</dbReference>
<dbReference type="RefSeq" id="WP_006081934.1">
    <property type="nucleotide sequence ID" value="NC_008750.1"/>
</dbReference>
<dbReference type="SMR" id="A1RIX4"/>
<dbReference type="GeneID" id="94727745"/>
<dbReference type="KEGG" id="shw:Sputw3181_1783"/>
<dbReference type="HOGENOM" id="CLU_151267_1_0_6"/>
<dbReference type="Proteomes" id="UP000002597">
    <property type="component" value="Chromosome"/>
</dbReference>
<dbReference type="GO" id="GO:0005829">
    <property type="term" value="C:cytosol"/>
    <property type="evidence" value="ECO:0007669"/>
    <property type="project" value="TreeGrafter"/>
</dbReference>
<dbReference type="GO" id="GO:0043022">
    <property type="term" value="F:ribosome binding"/>
    <property type="evidence" value="ECO:0007669"/>
    <property type="project" value="UniProtKB-UniRule"/>
</dbReference>
<dbReference type="GO" id="GO:0019843">
    <property type="term" value="F:rRNA binding"/>
    <property type="evidence" value="ECO:0007669"/>
    <property type="project" value="UniProtKB-UniRule"/>
</dbReference>
<dbReference type="GO" id="GO:0003743">
    <property type="term" value="F:translation initiation factor activity"/>
    <property type="evidence" value="ECO:0007669"/>
    <property type="project" value="UniProtKB-UniRule"/>
</dbReference>
<dbReference type="CDD" id="cd04451">
    <property type="entry name" value="S1_IF1"/>
    <property type="match status" value="1"/>
</dbReference>
<dbReference type="FunFam" id="2.40.50.140:FF:000002">
    <property type="entry name" value="Translation initiation factor IF-1"/>
    <property type="match status" value="1"/>
</dbReference>
<dbReference type="Gene3D" id="2.40.50.140">
    <property type="entry name" value="Nucleic acid-binding proteins"/>
    <property type="match status" value="1"/>
</dbReference>
<dbReference type="HAMAP" id="MF_00075">
    <property type="entry name" value="IF_1"/>
    <property type="match status" value="1"/>
</dbReference>
<dbReference type="InterPro" id="IPR012340">
    <property type="entry name" value="NA-bd_OB-fold"/>
</dbReference>
<dbReference type="InterPro" id="IPR006196">
    <property type="entry name" value="RNA-binding_domain_S1_IF1"/>
</dbReference>
<dbReference type="InterPro" id="IPR003029">
    <property type="entry name" value="S1_domain"/>
</dbReference>
<dbReference type="InterPro" id="IPR004368">
    <property type="entry name" value="TIF_IF1"/>
</dbReference>
<dbReference type="NCBIfam" id="TIGR00008">
    <property type="entry name" value="infA"/>
    <property type="match status" value="1"/>
</dbReference>
<dbReference type="PANTHER" id="PTHR33370">
    <property type="entry name" value="TRANSLATION INITIATION FACTOR IF-1, CHLOROPLASTIC"/>
    <property type="match status" value="1"/>
</dbReference>
<dbReference type="PANTHER" id="PTHR33370:SF1">
    <property type="entry name" value="TRANSLATION INITIATION FACTOR IF-1, CHLOROPLASTIC"/>
    <property type="match status" value="1"/>
</dbReference>
<dbReference type="Pfam" id="PF01176">
    <property type="entry name" value="eIF-1a"/>
    <property type="match status" value="1"/>
</dbReference>
<dbReference type="SMART" id="SM00316">
    <property type="entry name" value="S1"/>
    <property type="match status" value="1"/>
</dbReference>
<dbReference type="SUPFAM" id="SSF50249">
    <property type="entry name" value="Nucleic acid-binding proteins"/>
    <property type="match status" value="1"/>
</dbReference>
<dbReference type="PROSITE" id="PS50832">
    <property type="entry name" value="S1_IF1_TYPE"/>
    <property type="match status" value="1"/>
</dbReference>
<name>IF1_SHESW</name>
<sequence length="72" mass="8273">MAKEDNIEMQGTILETLPNTMFRVELENGHVVIAHISGKMRKNYIRILTGDKVTVQLTPYDLTKGRIVFRAR</sequence>
<evidence type="ECO:0000255" key="1">
    <source>
        <dbReference type="HAMAP-Rule" id="MF_00075"/>
    </source>
</evidence>
<accession>A1RIX4</accession>
<gene>
    <name evidence="1" type="primary">infA</name>
    <name type="ordered locus">Sputw3181_1783</name>
</gene>